<accession>Q7MMT6</accession>
<keyword id="KW-0131">Cell cycle</keyword>
<keyword id="KW-0132">Cell division</keyword>
<keyword id="KW-0997">Cell inner membrane</keyword>
<keyword id="KW-1003">Cell membrane</keyword>
<keyword id="KW-0472">Membrane</keyword>
<keyword id="KW-0812">Transmembrane</keyword>
<keyword id="KW-1133">Transmembrane helix</keyword>
<gene>
    <name evidence="1" type="primary">zipA</name>
    <name type="ordered locus">VV0981</name>
</gene>
<feature type="chain" id="PRO_0000214541" description="Cell division protein ZipA">
    <location>
        <begin position="1"/>
        <end position="311"/>
    </location>
</feature>
<feature type="topological domain" description="Periplasmic" evidence="1">
    <location>
        <begin position="1"/>
        <end position="5"/>
    </location>
</feature>
<feature type="transmembrane region" description="Helical" evidence="1">
    <location>
        <begin position="6"/>
        <end position="26"/>
    </location>
</feature>
<feature type="topological domain" description="Cytoplasmic" evidence="1">
    <location>
        <begin position="27"/>
        <end position="311"/>
    </location>
</feature>
<feature type="region of interest" description="Disordered" evidence="2">
    <location>
        <begin position="32"/>
        <end position="60"/>
    </location>
</feature>
<feature type="compositionally biased region" description="Basic and acidic residues" evidence="2">
    <location>
        <begin position="32"/>
        <end position="54"/>
    </location>
</feature>
<name>ZIPA_VIBVY</name>
<organism>
    <name type="scientific">Vibrio vulnificus (strain YJ016)</name>
    <dbReference type="NCBI Taxonomy" id="196600"/>
    <lineage>
        <taxon>Bacteria</taxon>
        <taxon>Pseudomonadati</taxon>
        <taxon>Pseudomonadota</taxon>
        <taxon>Gammaproteobacteria</taxon>
        <taxon>Vibrionales</taxon>
        <taxon>Vibrionaceae</taxon>
        <taxon>Vibrio</taxon>
    </lineage>
</organism>
<dbReference type="EMBL" id="BA000037">
    <property type="protein sequence ID" value="BAC93745.1"/>
    <property type="molecule type" value="Genomic_DNA"/>
</dbReference>
<dbReference type="RefSeq" id="WP_011149757.1">
    <property type="nucleotide sequence ID" value="NC_005139.1"/>
</dbReference>
<dbReference type="SMR" id="Q7MMT6"/>
<dbReference type="STRING" id="672.VV93_v1c09070"/>
<dbReference type="KEGG" id="vvy:VV0981"/>
<dbReference type="PATRIC" id="fig|196600.6.peg.979"/>
<dbReference type="eggNOG" id="COG3115">
    <property type="taxonomic scope" value="Bacteria"/>
</dbReference>
<dbReference type="HOGENOM" id="CLU_030174_1_0_6"/>
<dbReference type="Proteomes" id="UP000002675">
    <property type="component" value="Chromosome I"/>
</dbReference>
<dbReference type="GO" id="GO:0032153">
    <property type="term" value="C:cell division site"/>
    <property type="evidence" value="ECO:0007669"/>
    <property type="project" value="UniProtKB-UniRule"/>
</dbReference>
<dbReference type="GO" id="GO:0005886">
    <property type="term" value="C:plasma membrane"/>
    <property type="evidence" value="ECO:0007669"/>
    <property type="project" value="UniProtKB-SubCell"/>
</dbReference>
<dbReference type="GO" id="GO:0000917">
    <property type="term" value="P:division septum assembly"/>
    <property type="evidence" value="ECO:0007669"/>
    <property type="project" value="TreeGrafter"/>
</dbReference>
<dbReference type="GO" id="GO:0043093">
    <property type="term" value="P:FtsZ-dependent cytokinesis"/>
    <property type="evidence" value="ECO:0007669"/>
    <property type="project" value="UniProtKB-UniRule"/>
</dbReference>
<dbReference type="FunFam" id="3.30.1400.10:FF:000001">
    <property type="entry name" value="Cell division protein ZipA"/>
    <property type="match status" value="1"/>
</dbReference>
<dbReference type="Gene3D" id="3.30.1400.10">
    <property type="entry name" value="ZipA, C-terminal FtsZ-binding domain"/>
    <property type="match status" value="1"/>
</dbReference>
<dbReference type="HAMAP" id="MF_00509">
    <property type="entry name" value="ZipA"/>
    <property type="match status" value="1"/>
</dbReference>
<dbReference type="InterPro" id="IPR011919">
    <property type="entry name" value="Cell_div_ZipA"/>
</dbReference>
<dbReference type="InterPro" id="IPR007449">
    <property type="entry name" value="ZipA_FtsZ-bd_C"/>
</dbReference>
<dbReference type="InterPro" id="IPR036765">
    <property type="entry name" value="ZipA_FtsZ-bd_C_sf"/>
</dbReference>
<dbReference type="NCBIfam" id="TIGR02205">
    <property type="entry name" value="septum_zipA"/>
    <property type="match status" value="1"/>
</dbReference>
<dbReference type="PANTHER" id="PTHR38685">
    <property type="entry name" value="CELL DIVISION PROTEIN ZIPA"/>
    <property type="match status" value="1"/>
</dbReference>
<dbReference type="PANTHER" id="PTHR38685:SF1">
    <property type="entry name" value="CELL DIVISION PROTEIN ZIPA"/>
    <property type="match status" value="1"/>
</dbReference>
<dbReference type="Pfam" id="PF04354">
    <property type="entry name" value="ZipA_C"/>
    <property type="match status" value="1"/>
</dbReference>
<dbReference type="SMART" id="SM00771">
    <property type="entry name" value="ZipA_C"/>
    <property type="match status" value="1"/>
</dbReference>
<dbReference type="SUPFAM" id="SSF64383">
    <property type="entry name" value="Cell-division protein ZipA, C-terminal domain"/>
    <property type="match status" value="1"/>
</dbReference>
<protein>
    <recommendedName>
        <fullName evidence="1">Cell division protein ZipA</fullName>
    </recommendedName>
</protein>
<sequence>MQELRFVLIVVGALAIMALLFHGLWTSKKEGKAKFGDKPLSKLDLGESEPKESEMYVAPEDDYEIIRKERKEPAFEDEKPFSTSGVIGDPLIDDLHSGQDKENKFSQPKFDDDITVAEAEAAASIEQDAPAWVEQPQEIDEPLTHHPDEIDAFSGEETIVELDEPISKTVEPELQVIVLNVHCAGDSPFVGTKLFDSMQQNGLVYGEMDIFHRHLDMSGTGKVLFSVANMMHPGTLKHDDPAEFSTKGISFFMTLPCYGEADQNFNLMLKTAQKIADDLGGNVLDDKRNLMTPDRLAGYRRQIVEFKAANA</sequence>
<reference key="1">
    <citation type="journal article" date="2003" name="Genome Res.">
        <title>Comparative genome analysis of Vibrio vulnificus, a marine pathogen.</title>
        <authorList>
            <person name="Chen C.-Y."/>
            <person name="Wu K.-M."/>
            <person name="Chang Y.-C."/>
            <person name="Chang C.-H."/>
            <person name="Tsai H.-C."/>
            <person name="Liao T.-L."/>
            <person name="Liu Y.-M."/>
            <person name="Chen H.-J."/>
            <person name="Shen A.B.-T."/>
            <person name="Li J.-C."/>
            <person name="Su T.-L."/>
            <person name="Shao C.-P."/>
            <person name="Lee C.-T."/>
            <person name="Hor L.-I."/>
            <person name="Tsai S.-F."/>
        </authorList>
    </citation>
    <scope>NUCLEOTIDE SEQUENCE [LARGE SCALE GENOMIC DNA]</scope>
    <source>
        <strain>YJ016</strain>
    </source>
</reference>
<evidence type="ECO:0000255" key="1">
    <source>
        <dbReference type="HAMAP-Rule" id="MF_00509"/>
    </source>
</evidence>
<evidence type="ECO:0000256" key="2">
    <source>
        <dbReference type="SAM" id="MobiDB-lite"/>
    </source>
</evidence>
<comment type="function">
    <text evidence="1">Essential cell division protein that stabilizes the FtsZ protofilaments by cross-linking them and that serves as a cytoplasmic membrane anchor for the Z ring. Also required for the recruitment to the septal ring of downstream cell division proteins.</text>
</comment>
<comment type="subunit">
    <text evidence="1">Interacts with FtsZ via their C-terminal domains.</text>
</comment>
<comment type="subcellular location">
    <subcellularLocation>
        <location evidence="1">Cell inner membrane</location>
        <topology evidence="1">Single-pass type I membrane protein</topology>
    </subcellularLocation>
    <text evidence="1">Localizes to the Z ring in an FtsZ-dependent manner.</text>
</comment>
<comment type="similarity">
    <text evidence="1">Belongs to the ZipA family.</text>
</comment>
<proteinExistence type="inferred from homology"/>